<proteinExistence type="inferred from homology"/>
<name>Y528_SYNY3</name>
<keyword id="KW-0129">CBS domain</keyword>
<keyword id="KW-1003">Cell membrane</keyword>
<keyword id="KW-0378">Hydrolase</keyword>
<keyword id="KW-0472">Membrane</keyword>
<keyword id="KW-0479">Metal-binding</keyword>
<keyword id="KW-0482">Metalloprotease</keyword>
<keyword id="KW-0645">Protease</keyword>
<keyword id="KW-1185">Reference proteome</keyword>
<keyword id="KW-0677">Repeat</keyword>
<keyword id="KW-0812">Transmembrane</keyword>
<keyword id="KW-1133">Transmembrane helix</keyword>
<keyword id="KW-0862">Zinc</keyword>
<organism>
    <name type="scientific">Synechocystis sp. (strain ATCC 27184 / PCC 6803 / Kazusa)</name>
    <dbReference type="NCBI Taxonomy" id="1111708"/>
    <lineage>
        <taxon>Bacteria</taxon>
        <taxon>Bacillati</taxon>
        <taxon>Cyanobacteriota</taxon>
        <taxon>Cyanophyceae</taxon>
        <taxon>Synechococcales</taxon>
        <taxon>Merismopediaceae</taxon>
        <taxon>Synechocystis</taxon>
    </lineage>
</organism>
<reference key="1">
    <citation type="journal article" date="1995" name="DNA Res.">
        <title>Sequence analysis of the genome of the unicellular cyanobacterium Synechocystis sp. strain PCC6803. I. Sequence features in the 1 Mb region from map positions 64% to 92% of the genome.</title>
        <authorList>
            <person name="Kaneko T."/>
            <person name="Tanaka A."/>
            <person name="Sato S."/>
            <person name="Kotani H."/>
            <person name="Sazuka T."/>
            <person name="Miyajima N."/>
            <person name="Sugiura M."/>
            <person name="Tabata S."/>
        </authorList>
    </citation>
    <scope>NUCLEOTIDE SEQUENCE [LARGE SCALE GENOMIC DNA]</scope>
    <source>
        <strain>ATCC 27184 / PCC 6803 / N-1</strain>
    </source>
</reference>
<reference key="2">
    <citation type="journal article" date="1996" name="DNA Res.">
        <title>Sequence analysis of the genome of the unicellular cyanobacterium Synechocystis sp. strain PCC6803. II. Sequence determination of the entire genome and assignment of potential protein-coding regions.</title>
        <authorList>
            <person name="Kaneko T."/>
            <person name="Sato S."/>
            <person name="Kotani H."/>
            <person name="Tanaka A."/>
            <person name="Asamizu E."/>
            <person name="Nakamura Y."/>
            <person name="Miyajima N."/>
            <person name="Hirosawa M."/>
            <person name="Sugiura M."/>
            <person name="Sasamoto S."/>
            <person name="Kimura T."/>
            <person name="Hosouchi T."/>
            <person name="Matsuno A."/>
            <person name="Muraki A."/>
            <person name="Nakazaki N."/>
            <person name="Naruo K."/>
            <person name="Okumura S."/>
            <person name="Shimpo S."/>
            <person name="Takeuchi C."/>
            <person name="Wada T."/>
            <person name="Watanabe A."/>
            <person name="Yamada M."/>
            <person name="Yasuda M."/>
            <person name="Tabata S."/>
        </authorList>
    </citation>
    <scope>NUCLEOTIDE SEQUENCE [LARGE SCALE GENOMIC DNA]</scope>
    <source>
        <strain>ATCC 27184 / PCC 6803 / Kazusa</strain>
    </source>
</reference>
<protein>
    <recommendedName>
        <fullName>Putative zinc metalloprotease sll0528</fullName>
        <ecNumber>3.4.24.-</ecNumber>
    </recommendedName>
</protein>
<accession>Q55518</accession>
<feature type="chain" id="PRO_0000088479" description="Putative zinc metalloprotease sll0528">
    <location>
        <begin position="1"/>
        <end position="379"/>
    </location>
</feature>
<feature type="transmembrane region" description="Helical" evidence="2">
    <location>
        <begin position="20"/>
        <end position="40"/>
    </location>
</feature>
<feature type="transmembrane region" description="Helical" evidence="2">
    <location>
        <begin position="54"/>
        <end position="74"/>
    </location>
</feature>
<feature type="transmembrane region" description="Helical" evidence="2">
    <location>
        <begin position="115"/>
        <end position="135"/>
    </location>
</feature>
<feature type="transmembrane region" description="Helical" evidence="2">
    <location>
        <begin position="148"/>
        <end position="168"/>
    </location>
</feature>
<feature type="transmembrane region" description="Helical" evidence="2">
    <location>
        <begin position="212"/>
        <end position="232"/>
    </location>
</feature>
<feature type="domain" description="CBS 1" evidence="3">
    <location>
        <begin position="257"/>
        <end position="315"/>
    </location>
</feature>
<feature type="domain" description="CBS 2" evidence="3">
    <location>
        <begin position="322"/>
        <end position="379"/>
    </location>
</feature>
<feature type="active site" evidence="4">
    <location>
        <position position="76"/>
    </location>
</feature>
<feature type="binding site" evidence="4">
    <location>
        <position position="75"/>
    </location>
    <ligand>
        <name>Zn(2+)</name>
        <dbReference type="ChEBI" id="CHEBI:29105"/>
        <note>catalytic</note>
    </ligand>
</feature>
<feature type="binding site" evidence="4">
    <location>
        <position position="79"/>
    </location>
    <ligand>
        <name>Zn(2+)</name>
        <dbReference type="ChEBI" id="CHEBI:29105"/>
        <note>catalytic</note>
    </ligand>
</feature>
<dbReference type="EC" id="3.4.24.-"/>
<dbReference type="EMBL" id="BA000022">
    <property type="protein sequence ID" value="BAA10876.1"/>
    <property type="molecule type" value="Genomic_DNA"/>
</dbReference>
<dbReference type="PIR" id="S76029">
    <property type="entry name" value="S76029"/>
</dbReference>
<dbReference type="SMR" id="Q55518"/>
<dbReference type="STRING" id="1148.gene:10500382"/>
<dbReference type="PaxDb" id="1148-1001386"/>
<dbReference type="EnsemblBacteria" id="BAA10876">
    <property type="protein sequence ID" value="BAA10876"/>
    <property type="gene ID" value="BAA10876"/>
</dbReference>
<dbReference type="KEGG" id="syn:sll0528"/>
<dbReference type="eggNOG" id="COG0517">
    <property type="taxonomic scope" value="Bacteria"/>
</dbReference>
<dbReference type="eggNOG" id="COG1994">
    <property type="taxonomic scope" value="Bacteria"/>
</dbReference>
<dbReference type="InParanoid" id="Q55518"/>
<dbReference type="PhylomeDB" id="Q55518"/>
<dbReference type="BRENDA" id="3.4.24.85">
    <property type="organism ID" value="382"/>
</dbReference>
<dbReference type="Proteomes" id="UP000001425">
    <property type="component" value="Chromosome"/>
</dbReference>
<dbReference type="GO" id="GO:0005886">
    <property type="term" value="C:plasma membrane"/>
    <property type="evidence" value="ECO:0007669"/>
    <property type="project" value="UniProtKB-SubCell"/>
</dbReference>
<dbReference type="GO" id="GO:0046872">
    <property type="term" value="F:metal ion binding"/>
    <property type="evidence" value="ECO:0007669"/>
    <property type="project" value="UniProtKB-KW"/>
</dbReference>
<dbReference type="GO" id="GO:0008237">
    <property type="term" value="F:metallopeptidase activity"/>
    <property type="evidence" value="ECO:0007669"/>
    <property type="project" value="UniProtKB-KW"/>
</dbReference>
<dbReference type="GO" id="GO:0006508">
    <property type="term" value="P:proteolysis"/>
    <property type="evidence" value="ECO:0007669"/>
    <property type="project" value="UniProtKB-KW"/>
</dbReference>
<dbReference type="CDD" id="cd04639">
    <property type="entry name" value="CBS_pair_peptidase_M50"/>
    <property type="match status" value="1"/>
</dbReference>
<dbReference type="CDD" id="cd06164">
    <property type="entry name" value="S2P-M50_SpoIVFB_CBS"/>
    <property type="match status" value="1"/>
</dbReference>
<dbReference type="Gene3D" id="3.10.580.10">
    <property type="entry name" value="CBS-domain"/>
    <property type="match status" value="1"/>
</dbReference>
<dbReference type="InterPro" id="IPR000644">
    <property type="entry name" value="CBS_dom"/>
</dbReference>
<dbReference type="InterPro" id="IPR046342">
    <property type="entry name" value="CBS_dom_sf"/>
</dbReference>
<dbReference type="InterPro" id="IPR008915">
    <property type="entry name" value="Peptidase_M50"/>
</dbReference>
<dbReference type="InterPro" id="IPR016483">
    <property type="entry name" value="UCP006404_Pept_M50_CBS"/>
</dbReference>
<dbReference type="PANTHER" id="PTHR39188">
    <property type="entry name" value="MEMBRANE-ASSOCIATED ZINC METALLOPROTEASE M50B"/>
    <property type="match status" value="1"/>
</dbReference>
<dbReference type="PANTHER" id="PTHR39188:SF3">
    <property type="entry name" value="STAGE IV SPORULATION PROTEIN FB"/>
    <property type="match status" value="1"/>
</dbReference>
<dbReference type="Pfam" id="PF00571">
    <property type="entry name" value="CBS"/>
    <property type="match status" value="1"/>
</dbReference>
<dbReference type="Pfam" id="PF02163">
    <property type="entry name" value="Peptidase_M50"/>
    <property type="match status" value="2"/>
</dbReference>
<dbReference type="PIRSF" id="PIRSF006404">
    <property type="entry name" value="UCP006404_Pept_M50_CBS"/>
    <property type="match status" value="1"/>
</dbReference>
<dbReference type="SMART" id="SM00116">
    <property type="entry name" value="CBS"/>
    <property type="match status" value="2"/>
</dbReference>
<dbReference type="SUPFAM" id="SSF54631">
    <property type="entry name" value="CBS-domain pair"/>
    <property type="match status" value="1"/>
</dbReference>
<dbReference type="PROSITE" id="PS51371">
    <property type="entry name" value="CBS"/>
    <property type="match status" value="2"/>
</dbReference>
<dbReference type="PROSITE" id="PS00142">
    <property type="entry name" value="ZINC_PROTEASE"/>
    <property type="match status" value="1"/>
</dbReference>
<evidence type="ECO:0000250" key="1"/>
<evidence type="ECO:0000255" key="2"/>
<evidence type="ECO:0000255" key="3">
    <source>
        <dbReference type="PROSITE-ProRule" id="PRU00703"/>
    </source>
</evidence>
<evidence type="ECO:0000255" key="4">
    <source>
        <dbReference type="PROSITE-ProRule" id="PRU10095"/>
    </source>
</evidence>
<evidence type="ECO:0000305" key="5"/>
<comment type="cofactor">
    <cofactor evidence="1">
        <name>Zn(2+)</name>
        <dbReference type="ChEBI" id="CHEBI:29105"/>
    </cofactor>
    <text evidence="1">Binds 1 zinc ion per subunit.</text>
</comment>
<comment type="subcellular location">
    <subcellularLocation>
        <location evidence="5">Cell membrane</location>
        <topology evidence="5">Multi-pass membrane protein</topology>
    </subcellularLocation>
</comment>
<comment type="similarity">
    <text evidence="5">Belongs to the peptidase M50B family.</text>
</comment>
<sequence length="379" mass="40465">MLSLSLGGQFMNNNIRVGSLFGIPFYVNPSWFLILGLVTLSYGQDLARFPQLSGGTPWILGLITALLLFASVVAHELGHSLVALAQGIEVKSITLFLFGGLASLEKESNTPWQAFAVAIAGPAVSLVLFLGLTIVGTQIPLPVPGQAIIGLLGMINLALALFNLIPGLPLDGGNVLKSIVWQITGNQNKGILIASRVGQGFGWLAIAIGSLGILNILPIGSFWTILIGWFLLQNAGSSARNAQVKEQMEAFTAEDAVIPNSPIIPAGLNIREFANDYVIGKTPWRRFLVIGADNQLLGVLATEDIKHVPTSDWPQVTVDSLMQYPQQMVTVNANQSLFEVAQLLDQQKLSELLVVQPSGEVVGLLEKASIIKCLQTSAA</sequence>
<gene>
    <name type="ordered locus">sll0528</name>
</gene>